<proteinExistence type="inferred from homology"/>
<comment type="function">
    <text evidence="1">The RecF protein is involved in DNA metabolism; it is required for DNA replication and normal SOS inducibility. RecF binds preferentially to single-stranded, linear DNA. It also seems to bind ATP.</text>
</comment>
<comment type="subcellular location">
    <subcellularLocation>
        <location evidence="1">Cytoplasm</location>
    </subcellularLocation>
</comment>
<comment type="similarity">
    <text evidence="1">Belongs to the RecF family.</text>
</comment>
<feature type="chain" id="PRO_1000048581" description="DNA replication and repair protein RecF">
    <location>
        <begin position="1"/>
        <end position="370"/>
    </location>
</feature>
<feature type="binding site" evidence="1">
    <location>
        <begin position="30"/>
        <end position="37"/>
    </location>
    <ligand>
        <name>ATP</name>
        <dbReference type="ChEBI" id="CHEBI:30616"/>
    </ligand>
</feature>
<evidence type="ECO:0000255" key="1">
    <source>
        <dbReference type="HAMAP-Rule" id="MF_00365"/>
    </source>
</evidence>
<reference key="1">
    <citation type="journal article" date="2008" name="Antimicrob. Agents Chemother.">
        <title>Mutated response regulator graR is responsible for phenotypic conversion of Staphylococcus aureus from heterogeneous vancomycin-intermediate resistance to vancomycin-intermediate resistance.</title>
        <authorList>
            <person name="Neoh H.-M."/>
            <person name="Cui L."/>
            <person name="Yuzawa H."/>
            <person name="Takeuchi F."/>
            <person name="Matsuo M."/>
            <person name="Hiramatsu K."/>
        </authorList>
    </citation>
    <scope>NUCLEOTIDE SEQUENCE [LARGE SCALE GENOMIC DNA]</scope>
    <source>
        <strain>Mu3 / ATCC 700698</strain>
    </source>
</reference>
<gene>
    <name evidence="1" type="primary">recF</name>
    <name type="ordered locus">SAHV_0004</name>
</gene>
<sequence>MKLNTLQLENYRNYDEVTLKCHPDVNILIGENAQGKTNLLESIYTLALAKSHRTSNDKELIRFNADYAKIEGELSYRHGTMPLTMFITKKGKQVKVNHLEQSRLTQYIGHLNVVLFAPEDLNIVKGSPQIRRRFIDMELGQISAVYLNDLAQYQRILKQKNNYLKQLQLGQKKDLTMLEVLNQQFAEYAMKVTDKRAHFIQELESLAKPIHAGITNDKEALSLNYLPSLKFDYAQNEAARLEEIMSILSDNMQREKERGISLFGPHRDDISFDVNGMDAQTYGSQGQQRTTALSIKLAEIELMNIEVGEYPILLLDDVLSELDDSRQTHLLSTIQHKVQTFVTTTSVDGIDHEIMNNAKLYRINQGEIIK</sequence>
<organism>
    <name type="scientific">Staphylococcus aureus (strain Mu3 / ATCC 700698)</name>
    <dbReference type="NCBI Taxonomy" id="418127"/>
    <lineage>
        <taxon>Bacteria</taxon>
        <taxon>Bacillati</taxon>
        <taxon>Bacillota</taxon>
        <taxon>Bacilli</taxon>
        <taxon>Bacillales</taxon>
        <taxon>Staphylococcaceae</taxon>
        <taxon>Staphylococcus</taxon>
    </lineage>
</organism>
<dbReference type="EMBL" id="AP009324">
    <property type="protein sequence ID" value="BAF76887.1"/>
    <property type="molecule type" value="Genomic_DNA"/>
</dbReference>
<dbReference type="RefSeq" id="WP_000775113.1">
    <property type="nucleotide sequence ID" value="NZ_CTYB01000035.1"/>
</dbReference>
<dbReference type="SMR" id="A7WWN1"/>
<dbReference type="KEGG" id="saw:SAHV_0004"/>
<dbReference type="HOGENOM" id="CLU_040267_0_1_9"/>
<dbReference type="GO" id="GO:0005737">
    <property type="term" value="C:cytoplasm"/>
    <property type="evidence" value="ECO:0007669"/>
    <property type="project" value="UniProtKB-SubCell"/>
</dbReference>
<dbReference type="GO" id="GO:0005524">
    <property type="term" value="F:ATP binding"/>
    <property type="evidence" value="ECO:0007669"/>
    <property type="project" value="UniProtKB-UniRule"/>
</dbReference>
<dbReference type="GO" id="GO:0003697">
    <property type="term" value="F:single-stranded DNA binding"/>
    <property type="evidence" value="ECO:0007669"/>
    <property type="project" value="UniProtKB-UniRule"/>
</dbReference>
<dbReference type="GO" id="GO:0006260">
    <property type="term" value="P:DNA replication"/>
    <property type="evidence" value="ECO:0007669"/>
    <property type="project" value="UniProtKB-UniRule"/>
</dbReference>
<dbReference type="GO" id="GO:0000731">
    <property type="term" value="P:DNA synthesis involved in DNA repair"/>
    <property type="evidence" value="ECO:0007669"/>
    <property type="project" value="TreeGrafter"/>
</dbReference>
<dbReference type="GO" id="GO:0006302">
    <property type="term" value="P:double-strand break repair"/>
    <property type="evidence" value="ECO:0007669"/>
    <property type="project" value="TreeGrafter"/>
</dbReference>
<dbReference type="GO" id="GO:0009432">
    <property type="term" value="P:SOS response"/>
    <property type="evidence" value="ECO:0007669"/>
    <property type="project" value="UniProtKB-UniRule"/>
</dbReference>
<dbReference type="CDD" id="cd03242">
    <property type="entry name" value="ABC_RecF"/>
    <property type="match status" value="1"/>
</dbReference>
<dbReference type="FunFam" id="1.20.1050.90:FF:000002">
    <property type="entry name" value="DNA replication and repair protein RecF"/>
    <property type="match status" value="1"/>
</dbReference>
<dbReference type="Gene3D" id="3.40.50.300">
    <property type="entry name" value="P-loop containing nucleotide triphosphate hydrolases"/>
    <property type="match status" value="1"/>
</dbReference>
<dbReference type="Gene3D" id="1.20.1050.90">
    <property type="entry name" value="RecF/RecN/SMC, N-terminal domain"/>
    <property type="match status" value="1"/>
</dbReference>
<dbReference type="HAMAP" id="MF_00365">
    <property type="entry name" value="RecF"/>
    <property type="match status" value="1"/>
</dbReference>
<dbReference type="InterPro" id="IPR001238">
    <property type="entry name" value="DNA-binding_RecF"/>
</dbReference>
<dbReference type="InterPro" id="IPR018078">
    <property type="entry name" value="DNA-binding_RecF_CS"/>
</dbReference>
<dbReference type="InterPro" id="IPR027417">
    <property type="entry name" value="P-loop_NTPase"/>
</dbReference>
<dbReference type="InterPro" id="IPR003395">
    <property type="entry name" value="RecF/RecN/SMC_N"/>
</dbReference>
<dbReference type="InterPro" id="IPR042174">
    <property type="entry name" value="RecF_2"/>
</dbReference>
<dbReference type="NCBIfam" id="TIGR00611">
    <property type="entry name" value="recf"/>
    <property type="match status" value="1"/>
</dbReference>
<dbReference type="PANTHER" id="PTHR32182">
    <property type="entry name" value="DNA REPLICATION AND REPAIR PROTEIN RECF"/>
    <property type="match status" value="1"/>
</dbReference>
<dbReference type="PANTHER" id="PTHR32182:SF0">
    <property type="entry name" value="DNA REPLICATION AND REPAIR PROTEIN RECF"/>
    <property type="match status" value="1"/>
</dbReference>
<dbReference type="Pfam" id="PF02463">
    <property type="entry name" value="SMC_N"/>
    <property type="match status" value="1"/>
</dbReference>
<dbReference type="SUPFAM" id="SSF52540">
    <property type="entry name" value="P-loop containing nucleoside triphosphate hydrolases"/>
    <property type="match status" value="1"/>
</dbReference>
<dbReference type="PROSITE" id="PS00617">
    <property type="entry name" value="RECF_1"/>
    <property type="match status" value="1"/>
</dbReference>
<dbReference type="PROSITE" id="PS00618">
    <property type="entry name" value="RECF_2"/>
    <property type="match status" value="1"/>
</dbReference>
<keyword id="KW-0067">ATP-binding</keyword>
<keyword id="KW-0963">Cytoplasm</keyword>
<keyword id="KW-0227">DNA damage</keyword>
<keyword id="KW-0234">DNA repair</keyword>
<keyword id="KW-0235">DNA replication</keyword>
<keyword id="KW-0238">DNA-binding</keyword>
<keyword id="KW-0547">Nucleotide-binding</keyword>
<keyword id="KW-0742">SOS response</keyword>
<accession>A7WWN1</accession>
<protein>
    <recommendedName>
        <fullName evidence="1">DNA replication and repair protein RecF</fullName>
    </recommendedName>
</protein>
<name>RECF_STAA1</name>